<evidence type="ECO:0007829" key="1">
    <source>
        <dbReference type="PDB" id="1TDP"/>
    </source>
</evidence>
<dbReference type="EMBL" id="L29059">
    <property type="protein sequence ID" value="AAA72432.1"/>
    <property type="molecule type" value="Genomic_DNA"/>
</dbReference>
<dbReference type="EMBL" id="L47121">
    <property type="protein sequence ID" value="AAB81311.1"/>
    <property type="molecule type" value="Genomic_DNA"/>
</dbReference>
<dbReference type="EMBL" id="U76763">
    <property type="protein sequence ID" value="AAB18990.1"/>
    <property type="molecule type" value="Genomic_DNA"/>
</dbReference>
<dbReference type="PIR" id="D53589">
    <property type="entry name" value="D53589"/>
</dbReference>
<dbReference type="RefSeq" id="WP_176455301.1">
    <property type="nucleotide sequence ID" value="NZ_LN846932.1"/>
</dbReference>
<dbReference type="PDB" id="1TDP">
    <property type="method" value="NMR"/>
    <property type="chains" value="A=1-111"/>
</dbReference>
<dbReference type="PDBsum" id="1TDP"/>
<dbReference type="BMRB" id="P38582"/>
<dbReference type="SMR" id="P38582"/>
<dbReference type="EvolutionaryTrace" id="P38582"/>
<dbReference type="GO" id="GO:0005737">
    <property type="term" value="C:cytoplasm"/>
    <property type="evidence" value="ECO:0000314"/>
    <property type="project" value="CAFA"/>
</dbReference>
<dbReference type="GO" id="GO:0005886">
    <property type="term" value="C:plasma membrane"/>
    <property type="evidence" value="ECO:0000314"/>
    <property type="project" value="CAFA"/>
</dbReference>
<dbReference type="GO" id="GO:0030153">
    <property type="term" value="P:bacteriocin immunity"/>
    <property type="evidence" value="ECO:0000314"/>
    <property type="project" value="CAFA"/>
</dbReference>
<dbReference type="DisProt" id="DP00380"/>
<dbReference type="Gene3D" id="1.20.1440.50">
    <property type="entry name" value="Ta0600-like"/>
    <property type="match status" value="1"/>
</dbReference>
<dbReference type="InterPro" id="IPR023130">
    <property type="entry name" value="Ta0600-like_sf"/>
</dbReference>
<dbReference type="SUPFAM" id="SSF109797">
    <property type="entry name" value="Bacteriocin immunity protein-like"/>
    <property type="match status" value="1"/>
</dbReference>
<reference key="1">
    <citation type="journal article" date="1994" name="J. Biol. Chem.">
        <title>Chemical and genetic characterization of bacteriocins produced by Carnobacterium piscicola LV17B.</title>
        <authorList>
            <person name="Quadri L.E.N."/>
            <person name="Sailer M."/>
            <person name="Roy K.L."/>
            <person name="Vederas J.C."/>
            <person name="Stiles M.E."/>
        </authorList>
    </citation>
    <scope>NUCLEOTIDE SEQUENCE [GENOMIC DNA]</scope>
    <source>
        <strain>LV17B</strain>
    </source>
</reference>
<reference key="2">
    <citation type="submission" date="1996-11" db="EMBL/GenBank/DDBJ databases">
        <authorList>
            <person name="Herbin S."/>
            <person name="Lebrihi A."/>
            <person name="Lefebvre G."/>
        </authorList>
    </citation>
    <scope>NUCLEOTIDE SEQUENCE [GENOMIC DNA]</scope>
    <source>
        <strain>CP5</strain>
    </source>
</reference>
<feature type="chain" id="PRO_0000206195" description="Putative carnobacteriocin-B2 immunity protein">
    <location>
        <begin position="1"/>
        <end position="111"/>
    </location>
</feature>
<feature type="helix" evidence="1">
    <location>
        <begin position="4"/>
        <end position="16"/>
    </location>
</feature>
<feature type="helix" evidence="1">
    <location>
        <begin position="19"/>
        <end position="22"/>
    </location>
</feature>
<feature type="helix" evidence="1">
    <location>
        <begin position="25"/>
        <end position="39"/>
    </location>
</feature>
<feature type="turn" evidence="1">
    <location>
        <begin position="40"/>
        <end position="42"/>
    </location>
</feature>
<feature type="helix" evidence="1">
    <location>
        <begin position="44"/>
        <end position="60"/>
    </location>
</feature>
<feature type="helix" evidence="1">
    <location>
        <begin position="71"/>
        <end position="73"/>
    </location>
</feature>
<feature type="helix" evidence="1">
    <location>
        <begin position="75"/>
        <end position="85"/>
    </location>
</feature>
<feature type="helix" evidence="1">
    <location>
        <begin position="91"/>
        <end position="99"/>
    </location>
</feature>
<feature type="turn" evidence="1">
    <location>
        <begin position="100"/>
        <end position="102"/>
    </location>
</feature>
<proteinExistence type="evidence at protein level"/>
<comment type="function">
    <text>Could impart immunity to carnobacteriocin-B2 to naturally sensitive host strains.</text>
</comment>
<geneLocation type="plasmid">
    <name>61 kb</name>
</geneLocation>
<protein>
    <recommendedName>
        <fullName>Putative carnobacteriocin-B2 immunity protein</fullName>
    </recommendedName>
    <alternativeName>
        <fullName>Carnocin-CP52 immunity protein</fullName>
    </alternativeName>
</protein>
<name>CB2I_CARML</name>
<organism>
    <name type="scientific">Carnobacterium maltaromaticum</name>
    <name type="common">Carnobacterium piscicola</name>
    <dbReference type="NCBI Taxonomy" id="2751"/>
    <lineage>
        <taxon>Bacteria</taxon>
        <taxon>Bacillati</taxon>
        <taxon>Bacillota</taxon>
        <taxon>Bacilli</taxon>
        <taxon>Lactobacillales</taxon>
        <taxon>Carnobacteriaceae</taxon>
        <taxon>Carnobacterium</taxon>
    </lineage>
</organism>
<accession>P38582</accession>
<keyword id="KW-0002">3D-structure</keyword>
<keyword id="KW-0079">Bacteriocin immunity</keyword>
<keyword id="KW-0614">Plasmid</keyword>
<sequence length="111" mass="12666">MDIKSQTLYLNLSEAYKDPEVKANEFLSKLVVQCAGKLTASNSENSYIEVISLLSRGISSYYLSHKRIIPSSMLTIYTQIQKDIKNGNIDTEKLRKYEIAKGLMSVPYIYF</sequence>